<feature type="chain" id="PRO_0000213386" description="Nucleotide sugar transporter SLC35B4">
    <location>
        <begin position="1"/>
        <end position="331"/>
    </location>
</feature>
<feature type="transmembrane region" description="Helical" evidence="2">
    <location>
        <begin position="4"/>
        <end position="24"/>
    </location>
</feature>
<feature type="transmembrane region" description="Helical" evidence="2">
    <location>
        <begin position="30"/>
        <end position="50"/>
    </location>
</feature>
<feature type="transmembrane region" description="Helical" evidence="2">
    <location>
        <begin position="59"/>
        <end position="79"/>
    </location>
</feature>
<feature type="transmembrane region" description="Helical" evidence="2">
    <location>
        <begin position="92"/>
        <end position="112"/>
    </location>
</feature>
<feature type="transmembrane region" description="Helical" evidence="2">
    <location>
        <begin position="117"/>
        <end position="137"/>
    </location>
</feature>
<feature type="transmembrane region" description="Helical" evidence="2">
    <location>
        <begin position="153"/>
        <end position="173"/>
    </location>
</feature>
<feature type="transmembrane region" description="Helical" evidence="2">
    <location>
        <begin position="201"/>
        <end position="221"/>
    </location>
</feature>
<feature type="transmembrane region" description="Helical" evidence="2">
    <location>
        <begin position="229"/>
        <end position="249"/>
    </location>
</feature>
<feature type="transmembrane region" description="Helical" evidence="2">
    <location>
        <begin position="251"/>
        <end position="267"/>
    </location>
</feature>
<feature type="transmembrane region" description="Helical" evidence="2">
    <location>
        <begin position="268"/>
        <end position="288"/>
    </location>
</feature>
<feature type="transmembrane region" description="Helical" evidence="2">
    <location>
        <begin position="291"/>
        <end position="311"/>
    </location>
</feature>
<feature type="short sequence motif" description="Mediates endoplasmic reticulum retention" evidence="1">
    <location>
        <begin position="326"/>
        <end position="331"/>
    </location>
</feature>
<feature type="splice variant" id="VSP_016201" description="In isoform 2." evidence="3">
    <original>ANMILGIIILKKRYSIFKYTSIALVSVGIFICTFMSAKQVTSQSSLSENDGFQAFVWWLLGIGA</original>
    <variation>HPHHGVRLPHRHARRDPTQICEPHLFHLVLPEPLHPVALAGHPVCLHWDLNVHRGVEQPRDHKK</variation>
    <location>
        <begin position="103"/>
        <end position="166"/>
    </location>
</feature>
<feature type="splice variant" id="VSP_016202" description="In isoform 2." evidence="3">
    <location>
        <begin position="167"/>
        <end position="331"/>
    </location>
</feature>
<feature type="sequence conflict" description="In Ref. 1; BAB41143." evidence="4" ref="1">
    <original>N</original>
    <variation>D</variation>
    <location>
        <position position="80"/>
    </location>
</feature>
<protein>
    <recommendedName>
        <fullName>Nucleotide sugar transporter SLC35B4</fullName>
    </recommendedName>
    <alternativeName>
        <fullName>Solute carrier family 35 member B4</fullName>
    </alternativeName>
    <alternativeName>
        <fullName>UDP-xylose and UDP-N-acetylglucosamine transporter</fullName>
    </alternativeName>
</protein>
<proteinExistence type="evidence at transcript level"/>
<reference key="1">
    <citation type="submission" date="2001-06" db="EMBL/GenBank/DDBJ databases">
        <title>Isolation of full-length cDNA clones from macaque brain cDNA libraries.</title>
        <authorList>
            <person name="Osada N."/>
            <person name="Hida M."/>
            <person name="Kusuda J."/>
            <person name="Tanuma R."/>
            <person name="Iseki K."/>
            <person name="Hirai M."/>
            <person name="Terao K."/>
            <person name="Suzuki Y."/>
            <person name="Sugano S."/>
            <person name="Hashimoto K."/>
        </authorList>
    </citation>
    <scope>NUCLEOTIDE SEQUENCE [LARGE SCALE MRNA] (ISOFORMS 1 AND 2)</scope>
    <source>
        <tissue>Brain cortex</tissue>
        <tissue>Medulla oblongata</tissue>
    </source>
</reference>
<accession>Q95KB4</accession>
<accession>Q9BE34</accession>
<keyword id="KW-0025">Alternative splicing</keyword>
<keyword id="KW-0256">Endoplasmic reticulum</keyword>
<keyword id="KW-0472">Membrane</keyword>
<keyword id="KW-1185">Reference proteome</keyword>
<keyword id="KW-0762">Sugar transport</keyword>
<keyword id="KW-0812">Transmembrane</keyword>
<keyword id="KW-1133">Transmembrane helix</keyword>
<keyword id="KW-0813">Transport</keyword>
<gene>
    <name type="primary">SLC35B4</name>
    <name type="ORF">QccE-22467</name>
    <name type="ORF">QmoA-11096</name>
</gene>
<organism>
    <name type="scientific">Macaca fascicularis</name>
    <name type="common">Crab-eating macaque</name>
    <name type="synonym">Cynomolgus monkey</name>
    <dbReference type="NCBI Taxonomy" id="9541"/>
    <lineage>
        <taxon>Eukaryota</taxon>
        <taxon>Metazoa</taxon>
        <taxon>Chordata</taxon>
        <taxon>Craniata</taxon>
        <taxon>Vertebrata</taxon>
        <taxon>Euteleostomi</taxon>
        <taxon>Mammalia</taxon>
        <taxon>Eutheria</taxon>
        <taxon>Euarchontoglires</taxon>
        <taxon>Primates</taxon>
        <taxon>Haplorrhini</taxon>
        <taxon>Catarrhini</taxon>
        <taxon>Cercopithecidae</taxon>
        <taxon>Cercopithecinae</taxon>
        <taxon>Macaca</taxon>
    </lineage>
</organism>
<sequence length="331" mass="37394">MRPALAVGLVFAGCCSNVIFLELLARKHPGCGNIVTFAQFLFIAVEGFLFEADLGRKPPAIPIRYYAIMVTMFFTVSVVNNYALNLNIAMPLHMIFRSGSLIANMILGIIILKKRYSIFKYTSIALVSVGIFICTFMSAKQVTSQSSLSENDGFQAFVWWLLGIGALTFALLMSARMGIFQETLYKQFGKHSKEALFYNHALPLPGFIFLASDIYDHAVLFNKSELYEIPGIGVTLPIMWFYLLMNIITQYVCIRGVFILTTECASLTVTLVVTLRKFVSLIFSILYFQNPFTLWHWLGTLFVFIGTLMYTEVWNNLGTTKSEPQKDNKKN</sequence>
<comment type="function">
    <text evidence="1">Antiporter that transports nucleotide sugars across the endoplasmic reticulum (ER) membrane in exchange for another nucleotide sugar. May couple UDP-alpha-D-glucuronate (UDP-GlcA) or UDP-alpha-D-xylose (UDP-Xyl) efflux to UDP-alpha-D-glucuronate (UDP-GlcA) influx into the ER lumen, which in turn stimulates glucuronidation and excretion of endobiotics and xenobiotics.</text>
</comment>
<comment type="catalytic activity">
    <reaction evidence="1">
        <text>UDP-N-acetyl-alpha-D-glucosamine(in) + UDP-alpha-D-glucuronate(out) = UDP-N-acetyl-alpha-D-glucosamine(out) + UDP-alpha-D-glucuronate(in)</text>
        <dbReference type="Rhea" id="RHEA:73703"/>
        <dbReference type="ChEBI" id="CHEBI:57705"/>
        <dbReference type="ChEBI" id="CHEBI:58052"/>
    </reaction>
    <physiologicalReaction direction="left-to-right" evidence="1">
        <dbReference type="Rhea" id="RHEA:73704"/>
    </physiologicalReaction>
</comment>
<comment type="catalytic activity">
    <reaction evidence="1">
        <text>UDP-alpha-D-xylose(in) + UDP-alpha-D-glucuronate(out) = UDP-alpha-D-xylose(out) + UDP-alpha-D-glucuronate(in)</text>
        <dbReference type="Rhea" id="RHEA:74831"/>
        <dbReference type="ChEBI" id="CHEBI:57632"/>
        <dbReference type="ChEBI" id="CHEBI:58052"/>
    </reaction>
    <physiologicalReaction direction="left-to-right" evidence="1">
        <dbReference type="Rhea" id="RHEA:74832"/>
    </physiologicalReaction>
</comment>
<comment type="subcellular location">
    <subcellularLocation>
        <location evidence="1">Endoplasmic reticulum membrane</location>
        <topology evidence="2">Multi-pass membrane protein</topology>
    </subcellularLocation>
</comment>
<comment type="alternative products">
    <event type="alternative splicing"/>
    <isoform>
        <id>Q95KB4-1</id>
        <name>1</name>
        <sequence type="displayed"/>
    </isoform>
    <isoform>
        <id>Q95KB4-2</id>
        <name>2</name>
        <sequence type="described" ref="VSP_016201 VSP_016202"/>
    </isoform>
</comment>
<comment type="similarity">
    <text evidence="4">Belongs to the nucleotide-sugar transporter family. SLC35B subfamily.</text>
</comment>
<name>S35B4_MACFA</name>
<evidence type="ECO:0000250" key="1">
    <source>
        <dbReference type="UniProtKB" id="Q969S0"/>
    </source>
</evidence>
<evidence type="ECO:0000255" key="2"/>
<evidence type="ECO:0000303" key="3">
    <source ref="1"/>
</evidence>
<evidence type="ECO:0000305" key="4"/>
<dbReference type="EMBL" id="AB060201">
    <property type="protein sequence ID" value="BAB41143.1"/>
    <property type="molecule type" value="mRNA"/>
</dbReference>
<dbReference type="EMBL" id="AB063006">
    <property type="protein sequence ID" value="BAB60758.1"/>
    <property type="molecule type" value="mRNA"/>
</dbReference>
<dbReference type="RefSeq" id="XP_005550871.2">
    <molecule id="Q95KB4-1"/>
    <property type="nucleotide sequence ID" value="XM_005550814.4"/>
</dbReference>
<dbReference type="STRING" id="9541.ENSMFAP00000035685"/>
<dbReference type="GeneID" id="102118702"/>
<dbReference type="KEGG" id="mcf:102118702"/>
<dbReference type="CTD" id="84912"/>
<dbReference type="eggNOG" id="KOG1583">
    <property type="taxonomic scope" value="Eukaryota"/>
</dbReference>
<dbReference type="Proteomes" id="UP000233100">
    <property type="component" value="Unplaced"/>
</dbReference>
<dbReference type="GO" id="GO:0005789">
    <property type="term" value="C:endoplasmic reticulum membrane"/>
    <property type="evidence" value="ECO:0007669"/>
    <property type="project" value="UniProtKB-SubCell"/>
</dbReference>
<dbReference type="GO" id="GO:0000139">
    <property type="term" value="C:Golgi membrane"/>
    <property type="evidence" value="ECO:0007669"/>
    <property type="project" value="TreeGrafter"/>
</dbReference>
<dbReference type="GO" id="GO:0005462">
    <property type="term" value="F:UDP-N-acetylglucosamine transmembrane transporter activity"/>
    <property type="evidence" value="ECO:0007669"/>
    <property type="project" value="TreeGrafter"/>
</dbReference>
<dbReference type="GO" id="GO:0005464">
    <property type="term" value="F:UDP-xylose transmembrane transporter activity"/>
    <property type="evidence" value="ECO:0007669"/>
    <property type="project" value="TreeGrafter"/>
</dbReference>
<dbReference type="InterPro" id="IPR013657">
    <property type="entry name" value="SCL35B1-4/HUT1"/>
</dbReference>
<dbReference type="PANTHER" id="PTHR10778:SF4">
    <property type="entry name" value="NUCLEOTIDE SUGAR TRANSPORTER SLC35B4"/>
    <property type="match status" value="1"/>
</dbReference>
<dbReference type="PANTHER" id="PTHR10778">
    <property type="entry name" value="SOLUTE CARRIER FAMILY 35 MEMBER B"/>
    <property type="match status" value="1"/>
</dbReference>
<dbReference type="Pfam" id="PF08449">
    <property type="entry name" value="UAA"/>
    <property type="match status" value="1"/>
</dbReference>